<accession>Q0SP20</accession>
<accession>G0IQY9</accession>
<gene>
    <name type="ordered locus">BAPKO_0145</name>
    <name type="ordered locus">BafPKo_0142</name>
</gene>
<sequence length="96" mass="11398">MNIFKIFFILNYTIIFLIKIYQNTFSKLFGQQCIYKPTCSKYSIECLKKYNFLTALVLMTLRTIRCNALFKGGNDFIPKYNPISTSLKEFQKRLIK</sequence>
<proteinExistence type="inferred from homology"/>
<evidence type="ECO:0000255" key="1">
    <source>
        <dbReference type="HAMAP-Rule" id="MF_00386"/>
    </source>
</evidence>
<evidence type="ECO:0000305" key="2"/>
<protein>
    <recommendedName>
        <fullName evidence="1">Putative membrane protein insertion efficiency factor</fullName>
    </recommendedName>
</protein>
<reference key="1">
    <citation type="journal article" date="2006" name="BMC Genomics">
        <title>Comparative genome analysis: selection pressure on the Borrelia vls cassettes is essential for infectivity.</title>
        <authorList>
            <person name="Gloeckner G."/>
            <person name="Schulte-Spechtel U."/>
            <person name="Schilhabel M."/>
            <person name="Felder M."/>
            <person name="Suehnel J."/>
            <person name="Wilske B."/>
            <person name="Platzer M."/>
        </authorList>
    </citation>
    <scope>NUCLEOTIDE SEQUENCE [LARGE SCALE GENOMIC DNA]</scope>
    <source>
        <strain>PKo</strain>
    </source>
</reference>
<reference key="2">
    <citation type="journal article" date="2011" name="J. Bacteriol.">
        <title>Whole-genome sequences of two Borrelia afzelii and two Borrelia garinii Lyme disease agent isolates.</title>
        <authorList>
            <person name="Casjens S.R."/>
            <person name="Mongodin E.F."/>
            <person name="Qiu W.G."/>
            <person name="Dunn J.J."/>
            <person name="Luft B.J."/>
            <person name="Fraser-Liggett C.M."/>
            <person name="Schutzer S.E."/>
        </authorList>
    </citation>
    <scope>NUCLEOTIDE SEQUENCE [LARGE SCALE GENOMIC DNA]</scope>
    <source>
        <strain>PKo</strain>
    </source>
</reference>
<name>YIDD_BORAP</name>
<feature type="chain" id="PRO_1000013066" description="Putative membrane protein insertion efficiency factor">
    <location>
        <begin position="1"/>
        <end position="96"/>
    </location>
</feature>
<keyword id="KW-0997">Cell inner membrane</keyword>
<keyword id="KW-1003">Cell membrane</keyword>
<keyword id="KW-0472">Membrane</keyword>
<comment type="function">
    <text evidence="1">Could be involved in insertion of integral membrane proteins into the membrane.</text>
</comment>
<comment type="subcellular location">
    <subcellularLocation>
        <location evidence="1">Cell inner membrane</location>
        <topology evidence="1">Peripheral membrane protein</topology>
        <orientation evidence="1">Cytoplasmic side</orientation>
    </subcellularLocation>
</comment>
<comment type="similarity">
    <text evidence="1">Belongs to the UPF0161 family.</text>
</comment>
<comment type="sequence caution" evidence="2">
    <conflict type="erroneous initiation">
        <sequence resource="EMBL-CDS" id="AEL69375"/>
    </conflict>
    <text>Truncated N-terminus.</text>
</comment>
<organism>
    <name type="scientific">Borreliella afzelii (strain PKo)</name>
    <name type="common">Borrelia afzelii</name>
    <dbReference type="NCBI Taxonomy" id="390236"/>
    <lineage>
        <taxon>Bacteria</taxon>
        <taxon>Pseudomonadati</taxon>
        <taxon>Spirochaetota</taxon>
        <taxon>Spirochaetia</taxon>
        <taxon>Spirochaetales</taxon>
        <taxon>Borreliaceae</taxon>
        <taxon>Borreliella</taxon>
    </lineage>
</organism>
<dbReference type="EMBL" id="CP000395">
    <property type="protein sequence ID" value="ABH01408.1"/>
    <property type="molecule type" value="Genomic_DNA"/>
</dbReference>
<dbReference type="EMBL" id="CP002933">
    <property type="protein sequence ID" value="AEL69375.1"/>
    <property type="status" value="ALT_INIT"/>
    <property type="molecule type" value="Genomic_DNA"/>
</dbReference>
<dbReference type="STRING" id="29518.BLA32_03580"/>
<dbReference type="KEGG" id="baf:BAPKO_0145"/>
<dbReference type="KEGG" id="bafz:BafPKo_0142"/>
<dbReference type="PATRIC" id="fig|390236.22.peg.140"/>
<dbReference type="eggNOG" id="COG0759">
    <property type="taxonomic scope" value="Bacteria"/>
</dbReference>
<dbReference type="HOGENOM" id="CLU_3325269_0_0_12"/>
<dbReference type="OrthoDB" id="9801753at2"/>
<dbReference type="Proteomes" id="UP000005216">
    <property type="component" value="Chromosome"/>
</dbReference>
<dbReference type="GO" id="GO:0005886">
    <property type="term" value="C:plasma membrane"/>
    <property type="evidence" value="ECO:0007669"/>
    <property type="project" value="UniProtKB-SubCell"/>
</dbReference>
<dbReference type="HAMAP" id="MF_00386">
    <property type="entry name" value="UPF0161_YidD"/>
    <property type="match status" value="1"/>
</dbReference>
<dbReference type="InterPro" id="IPR002696">
    <property type="entry name" value="Membr_insert_effic_factor_YidD"/>
</dbReference>
<dbReference type="NCBIfam" id="TIGR00278">
    <property type="entry name" value="membrane protein insertion efficiency factor YidD"/>
    <property type="match status" value="1"/>
</dbReference>
<dbReference type="PANTHER" id="PTHR33383">
    <property type="entry name" value="MEMBRANE PROTEIN INSERTION EFFICIENCY FACTOR-RELATED"/>
    <property type="match status" value="1"/>
</dbReference>
<dbReference type="PANTHER" id="PTHR33383:SF1">
    <property type="entry name" value="MEMBRANE PROTEIN INSERTION EFFICIENCY FACTOR-RELATED"/>
    <property type="match status" value="1"/>
</dbReference>
<dbReference type="Pfam" id="PF01809">
    <property type="entry name" value="YidD"/>
    <property type="match status" value="1"/>
</dbReference>
<dbReference type="SMART" id="SM01234">
    <property type="entry name" value="Haemolytic"/>
    <property type="match status" value="1"/>
</dbReference>